<organism>
    <name type="scientific">Arabidopsis thaliana</name>
    <name type="common">Mouse-ear cress</name>
    <dbReference type="NCBI Taxonomy" id="3702"/>
    <lineage>
        <taxon>Eukaryota</taxon>
        <taxon>Viridiplantae</taxon>
        <taxon>Streptophyta</taxon>
        <taxon>Embryophyta</taxon>
        <taxon>Tracheophyta</taxon>
        <taxon>Spermatophyta</taxon>
        <taxon>Magnoliopsida</taxon>
        <taxon>eudicotyledons</taxon>
        <taxon>Gunneridae</taxon>
        <taxon>Pentapetalae</taxon>
        <taxon>rosids</taxon>
        <taxon>malvids</taxon>
        <taxon>Brassicales</taxon>
        <taxon>Brassicaceae</taxon>
        <taxon>Camelineae</taxon>
        <taxon>Arabidopsis</taxon>
    </lineage>
</organism>
<protein>
    <recommendedName>
        <fullName>Ethylene-responsive transcription factor ERF018</fullName>
    </recommendedName>
</protein>
<gene>
    <name type="primary">ERF018</name>
    <name type="ordered locus">At1g74930</name>
    <name type="ORF">F25A4.10</name>
    <name type="ORF">F9E10.22</name>
</gene>
<proteinExistence type="evidence at transcript level"/>
<feature type="chain" id="PRO_0000290378" description="Ethylene-responsive transcription factor ERF018">
    <location>
        <begin position="1"/>
        <end position="195"/>
    </location>
</feature>
<feature type="DNA-binding region" description="AP2/ERF" evidence="2">
    <location>
        <begin position="20"/>
        <end position="77"/>
    </location>
</feature>
<feature type="region of interest" description="Disordered" evidence="3">
    <location>
        <begin position="1"/>
        <end position="22"/>
    </location>
</feature>
<feature type="compositionally biased region" description="Basic and acidic residues" evidence="3">
    <location>
        <begin position="1"/>
        <end position="13"/>
    </location>
</feature>
<reference key="1">
    <citation type="journal article" date="2000" name="Nature">
        <title>Sequence and analysis of chromosome 1 of the plant Arabidopsis thaliana.</title>
        <authorList>
            <person name="Theologis A."/>
            <person name="Ecker J.R."/>
            <person name="Palm C.J."/>
            <person name="Federspiel N.A."/>
            <person name="Kaul S."/>
            <person name="White O."/>
            <person name="Alonso J."/>
            <person name="Altafi H."/>
            <person name="Araujo R."/>
            <person name="Bowman C.L."/>
            <person name="Brooks S.Y."/>
            <person name="Buehler E."/>
            <person name="Chan A."/>
            <person name="Chao Q."/>
            <person name="Chen H."/>
            <person name="Cheuk R.F."/>
            <person name="Chin C.W."/>
            <person name="Chung M.K."/>
            <person name="Conn L."/>
            <person name="Conway A.B."/>
            <person name="Conway A.R."/>
            <person name="Creasy T.H."/>
            <person name="Dewar K."/>
            <person name="Dunn P."/>
            <person name="Etgu P."/>
            <person name="Feldblyum T.V."/>
            <person name="Feng J.-D."/>
            <person name="Fong B."/>
            <person name="Fujii C.Y."/>
            <person name="Gill J.E."/>
            <person name="Goldsmith A.D."/>
            <person name="Haas B."/>
            <person name="Hansen N.F."/>
            <person name="Hughes B."/>
            <person name="Huizar L."/>
            <person name="Hunter J.L."/>
            <person name="Jenkins J."/>
            <person name="Johnson-Hopson C."/>
            <person name="Khan S."/>
            <person name="Khaykin E."/>
            <person name="Kim C.J."/>
            <person name="Koo H.L."/>
            <person name="Kremenetskaia I."/>
            <person name="Kurtz D.B."/>
            <person name="Kwan A."/>
            <person name="Lam B."/>
            <person name="Langin-Hooper S."/>
            <person name="Lee A."/>
            <person name="Lee J.M."/>
            <person name="Lenz C.A."/>
            <person name="Li J.H."/>
            <person name="Li Y.-P."/>
            <person name="Lin X."/>
            <person name="Liu S.X."/>
            <person name="Liu Z.A."/>
            <person name="Luros J.S."/>
            <person name="Maiti R."/>
            <person name="Marziali A."/>
            <person name="Militscher J."/>
            <person name="Miranda M."/>
            <person name="Nguyen M."/>
            <person name="Nierman W.C."/>
            <person name="Osborne B.I."/>
            <person name="Pai G."/>
            <person name="Peterson J."/>
            <person name="Pham P.K."/>
            <person name="Rizzo M."/>
            <person name="Rooney T."/>
            <person name="Rowley D."/>
            <person name="Sakano H."/>
            <person name="Salzberg S.L."/>
            <person name="Schwartz J.R."/>
            <person name="Shinn P."/>
            <person name="Southwick A.M."/>
            <person name="Sun H."/>
            <person name="Tallon L.J."/>
            <person name="Tambunga G."/>
            <person name="Toriumi M.J."/>
            <person name="Town C.D."/>
            <person name="Utterback T."/>
            <person name="Van Aken S."/>
            <person name="Vaysberg M."/>
            <person name="Vysotskaia V.S."/>
            <person name="Walker M."/>
            <person name="Wu D."/>
            <person name="Yu G."/>
            <person name="Fraser C.M."/>
            <person name="Venter J.C."/>
            <person name="Davis R.W."/>
        </authorList>
    </citation>
    <scope>NUCLEOTIDE SEQUENCE [LARGE SCALE GENOMIC DNA]</scope>
    <source>
        <strain>cv. Columbia</strain>
    </source>
</reference>
<reference key="2">
    <citation type="journal article" date="2017" name="Plant J.">
        <title>Araport11: a complete reannotation of the Arabidopsis thaliana reference genome.</title>
        <authorList>
            <person name="Cheng C.Y."/>
            <person name="Krishnakumar V."/>
            <person name="Chan A.P."/>
            <person name="Thibaud-Nissen F."/>
            <person name="Schobel S."/>
            <person name="Town C.D."/>
        </authorList>
    </citation>
    <scope>GENOME REANNOTATION</scope>
    <source>
        <strain>cv. Columbia</strain>
    </source>
</reference>
<reference key="3">
    <citation type="journal article" date="2003" name="Science">
        <title>Empirical analysis of transcriptional activity in the Arabidopsis genome.</title>
        <authorList>
            <person name="Yamada K."/>
            <person name="Lim J."/>
            <person name="Dale J.M."/>
            <person name="Chen H."/>
            <person name="Shinn P."/>
            <person name="Palm C.J."/>
            <person name="Southwick A.M."/>
            <person name="Wu H.C."/>
            <person name="Kim C.J."/>
            <person name="Nguyen M."/>
            <person name="Pham P.K."/>
            <person name="Cheuk R.F."/>
            <person name="Karlin-Newmann G."/>
            <person name="Liu S.X."/>
            <person name="Lam B."/>
            <person name="Sakano H."/>
            <person name="Wu T."/>
            <person name="Yu G."/>
            <person name="Miranda M."/>
            <person name="Quach H.L."/>
            <person name="Tripp M."/>
            <person name="Chang C.H."/>
            <person name="Lee J.M."/>
            <person name="Toriumi M.J."/>
            <person name="Chan M.M."/>
            <person name="Tang C.C."/>
            <person name="Onodera C.S."/>
            <person name="Deng J.M."/>
            <person name="Akiyama K."/>
            <person name="Ansari Y."/>
            <person name="Arakawa T."/>
            <person name="Banh J."/>
            <person name="Banno F."/>
            <person name="Bowser L."/>
            <person name="Brooks S.Y."/>
            <person name="Carninci P."/>
            <person name="Chao Q."/>
            <person name="Choy N."/>
            <person name="Enju A."/>
            <person name="Goldsmith A.D."/>
            <person name="Gurjal M."/>
            <person name="Hansen N.F."/>
            <person name="Hayashizaki Y."/>
            <person name="Johnson-Hopson C."/>
            <person name="Hsuan V.W."/>
            <person name="Iida K."/>
            <person name="Karnes M."/>
            <person name="Khan S."/>
            <person name="Koesema E."/>
            <person name="Ishida J."/>
            <person name="Jiang P.X."/>
            <person name="Jones T."/>
            <person name="Kawai J."/>
            <person name="Kamiya A."/>
            <person name="Meyers C."/>
            <person name="Nakajima M."/>
            <person name="Narusaka M."/>
            <person name="Seki M."/>
            <person name="Sakurai T."/>
            <person name="Satou M."/>
            <person name="Tamse R."/>
            <person name="Vaysberg M."/>
            <person name="Wallender E.K."/>
            <person name="Wong C."/>
            <person name="Yamamura Y."/>
            <person name="Yuan S."/>
            <person name="Shinozaki K."/>
            <person name="Davis R.W."/>
            <person name="Theologis A."/>
            <person name="Ecker J.R."/>
        </authorList>
    </citation>
    <scope>NUCLEOTIDE SEQUENCE [LARGE SCALE MRNA]</scope>
    <source>
        <strain>cv. Columbia</strain>
    </source>
</reference>
<reference key="4">
    <citation type="journal article" date="2006" name="Plant Physiol.">
        <title>Genome-wide analysis of the ERF gene family in Arabidopsis and rice.</title>
        <authorList>
            <person name="Nakano T."/>
            <person name="Suzuki K."/>
            <person name="Fujimura T."/>
            <person name="Shinshi H."/>
        </authorList>
    </citation>
    <scope>GENE FAMILY</scope>
    <scope>NOMENCLATURE</scope>
</reference>
<keyword id="KW-0010">Activator</keyword>
<keyword id="KW-0238">DNA-binding</keyword>
<keyword id="KW-0936">Ethylene signaling pathway</keyword>
<keyword id="KW-0539">Nucleus</keyword>
<keyword id="KW-1185">Reference proteome</keyword>
<keyword id="KW-0804">Transcription</keyword>
<keyword id="KW-0805">Transcription regulation</keyword>
<accession>Q9S7L5</accession>
<comment type="function">
    <text evidence="1">Probably acts as a transcriptional activator. Binds to the GCC-box pathogenesis-related promoter element. May be involved in the regulation of gene expression by stress factors and by components of stress signal transduction pathways (By similarity).</text>
</comment>
<comment type="subcellular location">
    <subcellularLocation>
        <location evidence="4">Nucleus</location>
    </subcellularLocation>
</comment>
<comment type="similarity">
    <text evidence="4">Belongs to the AP2/ERF transcription factor family. ERF subfamily.</text>
</comment>
<evidence type="ECO:0000250" key="1"/>
<evidence type="ECO:0000255" key="2">
    <source>
        <dbReference type="PROSITE-ProRule" id="PRU00366"/>
    </source>
</evidence>
<evidence type="ECO:0000256" key="3">
    <source>
        <dbReference type="SAM" id="MobiDB-lite"/>
    </source>
</evidence>
<evidence type="ECO:0000305" key="4"/>
<sequence>MVKQAMKEEEKKRNTAMQSKYKGVRKRKWGKWVSEIRLPHSRERIWLGSYDTPEKAARAFDAAQFCLRGGDANFNFPNNPPSISVEKSLTPPEIQEAAARFANTFQDIVKGEEESGLVPGSEIRPESPSTSASVATSTVDYDFSFLDLLPMNFGFDSFSDDFSGFSGGDRFTEILPIEDYGGESLLDESLILWDF</sequence>
<name>ERF18_ARATH</name>
<dbReference type="EMBL" id="AC008263">
    <property type="protein sequence ID" value="AAD55283.1"/>
    <property type="molecule type" value="Genomic_DNA"/>
</dbReference>
<dbReference type="EMBL" id="AC013258">
    <property type="protein sequence ID" value="AAG51936.1"/>
    <property type="molecule type" value="Genomic_DNA"/>
</dbReference>
<dbReference type="EMBL" id="CP002684">
    <property type="protein sequence ID" value="AEE35652.1"/>
    <property type="molecule type" value="Genomic_DNA"/>
</dbReference>
<dbReference type="EMBL" id="AY128309">
    <property type="protein sequence ID" value="AAM91512.1"/>
    <property type="molecule type" value="mRNA"/>
</dbReference>
<dbReference type="EMBL" id="BT003348">
    <property type="protein sequence ID" value="AAO29966.1"/>
    <property type="molecule type" value="mRNA"/>
</dbReference>
<dbReference type="PIR" id="A96779">
    <property type="entry name" value="A96779"/>
</dbReference>
<dbReference type="RefSeq" id="NP_177631.1">
    <property type="nucleotide sequence ID" value="NM_106151.3"/>
</dbReference>
<dbReference type="SMR" id="Q9S7L5"/>
<dbReference type="BioGRID" id="29051">
    <property type="interactions" value="14"/>
</dbReference>
<dbReference type="FunCoup" id="Q9S7L5">
    <property type="interactions" value="27"/>
</dbReference>
<dbReference type="IntAct" id="Q9S7L5">
    <property type="interactions" value="3"/>
</dbReference>
<dbReference type="STRING" id="3702.Q9S7L5"/>
<dbReference type="PaxDb" id="3702-AT1G74930.1"/>
<dbReference type="EnsemblPlants" id="AT1G74930.1">
    <property type="protein sequence ID" value="AT1G74930.1"/>
    <property type="gene ID" value="AT1G74930"/>
</dbReference>
<dbReference type="GeneID" id="843832"/>
<dbReference type="Gramene" id="AT1G74930.1">
    <property type="protein sequence ID" value="AT1G74930.1"/>
    <property type="gene ID" value="AT1G74930"/>
</dbReference>
<dbReference type="KEGG" id="ath:AT1G74930"/>
<dbReference type="Araport" id="AT1G74930"/>
<dbReference type="TAIR" id="AT1G74930">
    <property type="gene designation" value="ORA47"/>
</dbReference>
<dbReference type="eggNOG" id="ENOG502RZQP">
    <property type="taxonomic scope" value="Eukaryota"/>
</dbReference>
<dbReference type="HOGENOM" id="CLU_063331_2_1_1"/>
<dbReference type="InParanoid" id="Q9S7L5"/>
<dbReference type="OMA" id="FTHAEIQ"/>
<dbReference type="OrthoDB" id="1918918at2759"/>
<dbReference type="PhylomeDB" id="Q9S7L5"/>
<dbReference type="PRO" id="PR:Q9S7L5"/>
<dbReference type="Proteomes" id="UP000006548">
    <property type="component" value="Chromosome 1"/>
</dbReference>
<dbReference type="ExpressionAtlas" id="Q9S7L5">
    <property type="expression patterns" value="baseline and differential"/>
</dbReference>
<dbReference type="GO" id="GO:0005634">
    <property type="term" value="C:nucleus"/>
    <property type="evidence" value="ECO:0007669"/>
    <property type="project" value="UniProtKB-SubCell"/>
</dbReference>
<dbReference type="GO" id="GO:0003700">
    <property type="term" value="F:DNA-binding transcription factor activity"/>
    <property type="evidence" value="ECO:0000250"/>
    <property type="project" value="TAIR"/>
</dbReference>
<dbReference type="GO" id="GO:0000976">
    <property type="term" value="F:transcription cis-regulatory region binding"/>
    <property type="evidence" value="ECO:0000353"/>
    <property type="project" value="TAIR"/>
</dbReference>
<dbReference type="GO" id="GO:0051301">
    <property type="term" value="P:cell division"/>
    <property type="evidence" value="ECO:0000270"/>
    <property type="project" value="TAIR"/>
</dbReference>
<dbReference type="GO" id="GO:0002213">
    <property type="term" value="P:defense response to insect"/>
    <property type="evidence" value="ECO:0000270"/>
    <property type="project" value="TAIR"/>
</dbReference>
<dbReference type="GO" id="GO:0009873">
    <property type="term" value="P:ethylene-activated signaling pathway"/>
    <property type="evidence" value="ECO:0007669"/>
    <property type="project" value="UniProtKB-KW"/>
</dbReference>
<dbReference type="GO" id="GO:0010087">
    <property type="term" value="P:phloem or xylem histogenesis"/>
    <property type="evidence" value="ECO:0000270"/>
    <property type="project" value="TAIR"/>
</dbReference>
<dbReference type="GO" id="GO:0009611">
    <property type="term" value="P:response to wounding"/>
    <property type="evidence" value="ECO:0000270"/>
    <property type="project" value="TAIR"/>
</dbReference>
<dbReference type="CDD" id="cd00018">
    <property type="entry name" value="AP2"/>
    <property type="match status" value="1"/>
</dbReference>
<dbReference type="FunFam" id="3.30.730.10:FF:000001">
    <property type="entry name" value="Ethylene-responsive transcription factor 2"/>
    <property type="match status" value="1"/>
</dbReference>
<dbReference type="Gene3D" id="3.30.730.10">
    <property type="entry name" value="AP2/ERF domain"/>
    <property type="match status" value="1"/>
</dbReference>
<dbReference type="InterPro" id="IPR001471">
    <property type="entry name" value="AP2/ERF_dom"/>
</dbReference>
<dbReference type="InterPro" id="IPR036955">
    <property type="entry name" value="AP2/ERF_dom_sf"/>
</dbReference>
<dbReference type="InterPro" id="IPR051032">
    <property type="entry name" value="AP2/ERF_TF_ERF_subfamily"/>
</dbReference>
<dbReference type="InterPro" id="IPR016177">
    <property type="entry name" value="DNA-bd_dom_sf"/>
</dbReference>
<dbReference type="PANTHER" id="PTHR31985:SF283">
    <property type="entry name" value="ETHYLENE-RESPONSIVE TRANSCRIPTION FACTOR ERF018"/>
    <property type="match status" value="1"/>
</dbReference>
<dbReference type="PANTHER" id="PTHR31985">
    <property type="entry name" value="ETHYLENE-RESPONSIVE TRANSCRIPTION FACTOR ERF042-RELATED"/>
    <property type="match status" value="1"/>
</dbReference>
<dbReference type="Pfam" id="PF00847">
    <property type="entry name" value="AP2"/>
    <property type="match status" value="1"/>
</dbReference>
<dbReference type="PRINTS" id="PR00367">
    <property type="entry name" value="ETHRSPELEMNT"/>
</dbReference>
<dbReference type="SMART" id="SM00380">
    <property type="entry name" value="AP2"/>
    <property type="match status" value="1"/>
</dbReference>
<dbReference type="SUPFAM" id="SSF54171">
    <property type="entry name" value="DNA-binding domain"/>
    <property type="match status" value="1"/>
</dbReference>
<dbReference type="PROSITE" id="PS51032">
    <property type="entry name" value="AP2_ERF"/>
    <property type="match status" value="1"/>
</dbReference>